<evidence type="ECO:0000255" key="1">
    <source>
        <dbReference type="HAMAP-Rule" id="MF_00028"/>
    </source>
</evidence>
<name>COBQ_CLOAB</name>
<gene>
    <name evidence="1" type="primary">cobQ</name>
    <name type="ordered locus">CA_C1374</name>
</gene>
<comment type="function">
    <text evidence="1">Catalyzes amidations at positions B, D, E, and G on adenosylcobyrinic A,C-diamide. NH(2) groups are provided by glutamine, and one molecule of ATP is hydrogenolyzed for each amidation.</text>
</comment>
<comment type="pathway">
    <text evidence="1">Cofactor biosynthesis; adenosylcobalamin biosynthesis.</text>
</comment>
<comment type="similarity">
    <text evidence="1">Belongs to the CobB/CobQ family. CobQ subfamily.</text>
</comment>
<sequence>MSRIMIQGTASSVGKSILVAALCRIFKQDGFSVCPYKSQNMSLNSYITLDGKEMGRAQVLQAYAAGLEPEVYMNPILLKPTTDKSCQVIVKGEVYGVSSAKNYYNMKKEFAPMLKEDFEELEDKFDIVVIEGAGSPAEINLRENDIVNMGLAELVDAPVVLVGDIDKGGVFASLFGTVMLLEENERKRIKGTIINKFRGDVEILKPGLSMLEERINIPCFGVVPYFNLSLEDEDGAVYFNTKVNSKIDVAVIKLPHISNFTDIDALKIEEDVSLRYITSSENFGTPDLLIIPGSKNTIGDLLYIRKNGIENKIKQYAEKNGLIFGICGGYQMLGRLIEDPFKVETELGEINGMGLLDIRTVFAEKKVTTRVQGSVIDKQIPVYGYEIHMGISSYGEKAKPFIKIENKVGIDDGAVNEGGNIMGTYIHGIFDGANFREYIINFLRDKKGIERKKSVVYEDVRNGEIDRLADIVRNSLDMNSIYSVMGIEGKK</sequence>
<proteinExistence type="inferred from homology"/>
<feature type="chain" id="PRO_0000141296" description="Cobyric acid synthase">
    <location>
        <begin position="1"/>
        <end position="491"/>
    </location>
</feature>
<feature type="domain" description="GATase cobBQ-type" evidence="1">
    <location>
        <begin position="246"/>
        <end position="435"/>
    </location>
</feature>
<feature type="active site" description="Nucleophile" evidence="1">
    <location>
        <position position="327"/>
    </location>
</feature>
<feature type="active site" evidence="1">
    <location>
        <position position="427"/>
    </location>
</feature>
<keyword id="KW-0169">Cobalamin biosynthesis</keyword>
<keyword id="KW-0315">Glutamine amidotransferase</keyword>
<keyword id="KW-1185">Reference proteome</keyword>
<protein>
    <recommendedName>
        <fullName evidence="1">Cobyric acid synthase</fullName>
    </recommendedName>
</protein>
<dbReference type="EMBL" id="AE001437">
    <property type="protein sequence ID" value="AAK79342.1"/>
    <property type="molecule type" value="Genomic_DNA"/>
</dbReference>
<dbReference type="PIR" id="C97069">
    <property type="entry name" value="C97069"/>
</dbReference>
<dbReference type="RefSeq" id="NP_348002.1">
    <property type="nucleotide sequence ID" value="NC_003030.1"/>
</dbReference>
<dbReference type="RefSeq" id="WP_010964683.1">
    <property type="nucleotide sequence ID" value="NC_003030.1"/>
</dbReference>
<dbReference type="SMR" id="Q97JB2"/>
<dbReference type="STRING" id="272562.CA_C1374"/>
<dbReference type="DNASU" id="1117557"/>
<dbReference type="KEGG" id="cac:CA_C1374"/>
<dbReference type="PATRIC" id="fig|272562.8.peg.1579"/>
<dbReference type="eggNOG" id="COG1492">
    <property type="taxonomic scope" value="Bacteria"/>
</dbReference>
<dbReference type="HOGENOM" id="CLU_019250_2_2_9"/>
<dbReference type="OrthoDB" id="9808302at2"/>
<dbReference type="UniPathway" id="UPA00148"/>
<dbReference type="Proteomes" id="UP000000814">
    <property type="component" value="Chromosome"/>
</dbReference>
<dbReference type="GO" id="GO:0015420">
    <property type="term" value="F:ABC-type vitamin B12 transporter activity"/>
    <property type="evidence" value="ECO:0007669"/>
    <property type="project" value="UniProtKB-UniRule"/>
</dbReference>
<dbReference type="GO" id="GO:0003824">
    <property type="term" value="F:catalytic activity"/>
    <property type="evidence" value="ECO:0007669"/>
    <property type="project" value="InterPro"/>
</dbReference>
<dbReference type="GO" id="GO:0009236">
    <property type="term" value="P:cobalamin biosynthetic process"/>
    <property type="evidence" value="ECO:0007669"/>
    <property type="project" value="UniProtKB-UniRule"/>
</dbReference>
<dbReference type="CDD" id="cd05389">
    <property type="entry name" value="CobQ_N"/>
    <property type="match status" value="1"/>
</dbReference>
<dbReference type="CDD" id="cd01750">
    <property type="entry name" value="GATase1_CobQ"/>
    <property type="match status" value="1"/>
</dbReference>
<dbReference type="Gene3D" id="3.40.50.880">
    <property type="match status" value="1"/>
</dbReference>
<dbReference type="Gene3D" id="3.40.50.300">
    <property type="entry name" value="P-loop containing nucleotide triphosphate hydrolases"/>
    <property type="match status" value="1"/>
</dbReference>
<dbReference type="HAMAP" id="MF_00028">
    <property type="entry name" value="CobQ"/>
    <property type="match status" value="1"/>
</dbReference>
<dbReference type="InterPro" id="IPR029062">
    <property type="entry name" value="Class_I_gatase-like"/>
</dbReference>
<dbReference type="InterPro" id="IPR002586">
    <property type="entry name" value="CobQ/CobB/MinD/ParA_Nub-bd_dom"/>
</dbReference>
<dbReference type="InterPro" id="IPR033949">
    <property type="entry name" value="CobQ_GATase1"/>
</dbReference>
<dbReference type="InterPro" id="IPR047045">
    <property type="entry name" value="CobQ_N"/>
</dbReference>
<dbReference type="InterPro" id="IPR004459">
    <property type="entry name" value="CobQ_synth"/>
</dbReference>
<dbReference type="InterPro" id="IPR011698">
    <property type="entry name" value="GATase_3"/>
</dbReference>
<dbReference type="InterPro" id="IPR027417">
    <property type="entry name" value="P-loop_NTPase"/>
</dbReference>
<dbReference type="NCBIfam" id="TIGR00313">
    <property type="entry name" value="cobQ"/>
    <property type="match status" value="1"/>
</dbReference>
<dbReference type="NCBIfam" id="NF001989">
    <property type="entry name" value="PRK00784.1"/>
    <property type="match status" value="1"/>
</dbReference>
<dbReference type="PANTHER" id="PTHR21343:SF1">
    <property type="entry name" value="COBYRIC ACID SYNTHASE"/>
    <property type="match status" value="1"/>
</dbReference>
<dbReference type="PANTHER" id="PTHR21343">
    <property type="entry name" value="DETHIOBIOTIN SYNTHETASE"/>
    <property type="match status" value="1"/>
</dbReference>
<dbReference type="Pfam" id="PF01656">
    <property type="entry name" value="CbiA"/>
    <property type="match status" value="1"/>
</dbReference>
<dbReference type="Pfam" id="PF07685">
    <property type="entry name" value="GATase_3"/>
    <property type="match status" value="1"/>
</dbReference>
<dbReference type="SUPFAM" id="SSF52317">
    <property type="entry name" value="Class I glutamine amidotransferase-like"/>
    <property type="match status" value="1"/>
</dbReference>
<dbReference type="SUPFAM" id="SSF52540">
    <property type="entry name" value="P-loop containing nucleoside triphosphate hydrolases"/>
    <property type="match status" value="1"/>
</dbReference>
<dbReference type="PROSITE" id="PS51274">
    <property type="entry name" value="GATASE_COBBQ"/>
    <property type="match status" value="1"/>
</dbReference>
<reference key="1">
    <citation type="journal article" date="2001" name="J. Bacteriol.">
        <title>Genome sequence and comparative analysis of the solvent-producing bacterium Clostridium acetobutylicum.</title>
        <authorList>
            <person name="Noelling J."/>
            <person name="Breton G."/>
            <person name="Omelchenko M.V."/>
            <person name="Makarova K.S."/>
            <person name="Zeng Q."/>
            <person name="Gibson R."/>
            <person name="Lee H.M."/>
            <person name="Dubois J."/>
            <person name="Qiu D."/>
            <person name="Hitti J."/>
            <person name="Wolf Y.I."/>
            <person name="Tatusov R.L."/>
            <person name="Sabathe F."/>
            <person name="Doucette-Stamm L.A."/>
            <person name="Soucaille P."/>
            <person name="Daly M.J."/>
            <person name="Bennett G.N."/>
            <person name="Koonin E.V."/>
            <person name="Smith D.R."/>
        </authorList>
    </citation>
    <scope>NUCLEOTIDE SEQUENCE [LARGE SCALE GENOMIC DNA]</scope>
    <source>
        <strain>ATCC 824 / DSM 792 / JCM 1419 / IAM 19013 / LMG 5710 / NBRC 13948 / NRRL B-527 / VKM B-1787 / 2291 / W</strain>
    </source>
</reference>
<organism>
    <name type="scientific">Clostridium acetobutylicum (strain ATCC 824 / DSM 792 / JCM 1419 / IAM 19013 / LMG 5710 / NBRC 13948 / NRRL B-527 / VKM B-1787 / 2291 / W)</name>
    <dbReference type="NCBI Taxonomy" id="272562"/>
    <lineage>
        <taxon>Bacteria</taxon>
        <taxon>Bacillati</taxon>
        <taxon>Bacillota</taxon>
        <taxon>Clostridia</taxon>
        <taxon>Eubacteriales</taxon>
        <taxon>Clostridiaceae</taxon>
        <taxon>Clostridium</taxon>
    </lineage>
</organism>
<accession>Q97JB2</accession>